<organism>
    <name type="scientific">Mus musculus</name>
    <name type="common">Mouse</name>
    <dbReference type="NCBI Taxonomy" id="10090"/>
    <lineage>
        <taxon>Eukaryota</taxon>
        <taxon>Metazoa</taxon>
        <taxon>Chordata</taxon>
        <taxon>Craniata</taxon>
        <taxon>Vertebrata</taxon>
        <taxon>Euteleostomi</taxon>
        <taxon>Mammalia</taxon>
        <taxon>Eutheria</taxon>
        <taxon>Euarchontoglires</taxon>
        <taxon>Glires</taxon>
        <taxon>Rodentia</taxon>
        <taxon>Myomorpha</taxon>
        <taxon>Muroidea</taxon>
        <taxon>Muridae</taxon>
        <taxon>Murinae</taxon>
        <taxon>Mus</taxon>
        <taxon>Mus</taxon>
    </lineage>
</organism>
<dbReference type="EC" id="2.1.1.367" evidence="10"/>
<dbReference type="EMBL" id="AB078338">
    <property type="protein sequence ID" value="BAC79382.1"/>
    <property type="molecule type" value="mRNA"/>
</dbReference>
<dbReference type="EMBL" id="AL611950">
    <property type="status" value="NOT_ANNOTATED_CDS"/>
    <property type="molecule type" value="Genomic_DNA"/>
</dbReference>
<dbReference type="EMBL" id="AL627123">
    <property type="status" value="NOT_ANNOTATED_CDS"/>
    <property type="molecule type" value="Genomic_DNA"/>
</dbReference>
<dbReference type="EMBL" id="AL627127">
    <property type="status" value="NOT_ANNOTATED_CDS"/>
    <property type="molecule type" value="Genomic_DNA"/>
</dbReference>
<dbReference type="EMBL" id="AL627226">
    <property type="status" value="NOT_ANNOTATED_CDS"/>
    <property type="molecule type" value="Genomic_DNA"/>
</dbReference>
<dbReference type="EMBL" id="BC059838">
    <property type="protein sequence ID" value="AAH59838.1"/>
    <property type="molecule type" value="mRNA"/>
</dbReference>
<dbReference type="EMBL" id="AK173230">
    <property type="protein sequence ID" value="BAD32508.1"/>
    <property type="molecule type" value="mRNA"/>
</dbReference>
<dbReference type="CCDS" id="CCDS38989.1">
    <molecule id="A2A935-1"/>
</dbReference>
<dbReference type="CCDS" id="CCDS71532.1">
    <molecule id="A2A935-2"/>
</dbReference>
<dbReference type="RefSeq" id="NP_001277955.1">
    <property type="nucleotide sequence ID" value="NM_001291026.1"/>
</dbReference>
<dbReference type="RefSeq" id="NP_001277958.1">
    <molecule id="A2A935-2"/>
    <property type="nucleotide sequence ID" value="NM_001291029.2"/>
</dbReference>
<dbReference type="RefSeq" id="NP_081780.3">
    <molecule id="A2A935-1"/>
    <property type="nucleotide sequence ID" value="NM_027504.3"/>
</dbReference>
<dbReference type="RefSeq" id="XP_006539236.1">
    <molecule id="A2A935-3"/>
    <property type="nucleotide sequence ID" value="XM_006539173.5"/>
</dbReference>
<dbReference type="SMR" id="A2A935"/>
<dbReference type="BioGRID" id="214194">
    <property type="interactions" value="5"/>
</dbReference>
<dbReference type="DIP" id="DIP-60593N"/>
<dbReference type="FunCoup" id="A2A935">
    <property type="interactions" value="391"/>
</dbReference>
<dbReference type="IntAct" id="A2A935">
    <property type="interactions" value="991"/>
</dbReference>
<dbReference type="MINT" id="A2A935"/>
<dbReference type="STRING" id="10090.ENSMUSP00000030902"/>
<dbReference type="GlyGen" id="A2A935">
    <property type="glycosylation" value="2 sites"/>
</dbReference>
<dbReference type="iPTMnet" id="A2A935"/>
<dbReference type="PhosphoSitePlus" id="A2A935"/>
<dbReference type="jPOST" id="A2A935"/>
<dbReference type="PaxDb" id="10090-ENSMUSP00000030902"/>
<dbReference type="ProteomicsDB" id="291862">
    <molecule id="A2A935-1"/>
</dbReference>
<dbReference type="ProteomicsDB" id="291863">
    <molecule id="A2A935-2"/>
</dbReference>
<dbReference type="ProteomicsDB" id="291864">
    <molecule id="A2A935-3"/>
</dbReference>
<dbReference type="Antibodypedia" id="26849">
    <property type="antibodies" value="214 antibodies from 30 providers"/>
</dbReference>
<dbReference type="DNASU" id="70673"/>
<dbReference type="Ensembl" id="ENSMUST00000030902.13">
    <molecule id="A2A935-1"/>
    <property type="protein sequence ID" value="ENSMUSP00000030902.7"/>
    <property type="gene ID" value="ENSMUSG00000039410.17"/>
</dbReference>
<dbReference type="Ensembl" id="ENSMUST00000070313.14">
    <molecule id="A2A935-2"/>
    <property type="protein sequence ID" value="ENSMUSP00000064546.8"/>
    <property type="gene ID" value="ENSMUSG00000039410.17"/>
</dbReference>
<dbReference type="GeneID" id="70673"/>
<dbReference type="KEGG" id="mmu:70673"/>
<dbReference type="UCSC" id="uc008wbu.1">
    <molecule id="A2A935-1"/>
    <property type="organism name" value="mouse"/>
</dbReference>
<dbReference type="UCSC" id="uc008wbx.1">
    <molecule id="A2A935-2"/>
    <property type="organism name" value="mouse"/>
</dbReference>
<dbReference type="AGR" id="MGI:1917923"/>
<dbReference type="CTD" id="63976"/>
<dbReference type="MGI" id="MGI:1917923">
    <property type="gene designation" value="Prdm16"/>
</dbReference>
<dbReference type="VEuPathDB" id="HostDB:ENSMUSG00000039410"/>
<dbReference type="eggNOG" id="KOG1721">
    <property type="taxonomic scope" value="Eukaryota"/>
</dbReference>
<dbReference type="GeneTree" id="ENSGT00940000160951"/>
<dbReference type="HOGENOM" id="CLU_006627_0_0_1"/>
<dbReference type="InParanoid" id="A2A935"/>
<dbReference type="OMA" id="PRGAYED"/>
<dbReference type="OrthoDB" id="9368434at2759"/>
<dbReference type="TreeFam" id="TF315309"/>
<dbReference type="BRENDA" id="2.1.1.367">
    <property type="organism ID" value="3474"/>
</dbReference>
<dbReference type="Reactome" id="R-MMU-3214841">
    <property type="pathway name" value="PKMTs methylate histone lysines"/>
</dbReference>
<dbReference type="BioGRID-ORCS" id="70673">
    <property type="hits" value="4 hits in 83 CRISPR screens"/>
</dbReference>
<dbReference type="ChiTaRS" id="Prdm16">
    <property type="organism name" value="mouse"/>
</dbReference>
<dbReference type="PRO" id="PR:A2A935"/>
<dbReference type="Proteomes" id="UP000000589">
    <property type="component" value="Chromosome 4"/>
</dbReference>
<dbReference type="RNAct" id="A2A935">
    <property type="molecule type" value="protein"/>
</dbReference>
<dbReference type="Bgee" id="ENSMUSG00000039410">
    <property type="expression patterns" value="Expressed in manus and 235 other cell types or tissues"/>
</dbReference>
<dbReference type="ExpressionAtlas" id="A2A935">
    <property type="expression patterns" value="baseline and differential"/>
</dbReference>
<dbReference type="GO" id="GO:0005737">
    <property type="term" value="C:cytoplasm"/>
    <property type="evidence" value="ECO:0007669"/>
    <property type="project" value="UniProtKB-SubCell"/>
</dbReference>
<dbReference type="GO" id="GO:0005654">
    <property type="term" value="C:nucleoplasm"/>
    <property type="evidence" value="ECO:0000304"/>
    <property type="project" value="Reactome"/>
</dbReference>
<dbReference type="GO" id="GO:0005634">
    <property type="term" value="C:nucleus"/>
    <property type="evidence" value="ECO:0000314"/>
    <property type="project" value="UniProtKB"/>
</dbReference>
<dbReference type="GO" id="GO:0005667">
    <property type="term" value="C:transcription regulator complex"/>
    <property type="evidence" value="ECO:0000305"/>
    <property type="project" value="MGI"/>
</dbReference>
<dbReference type="GO" id="GO:0017053">
    <property type="term" value="C:transcription repressor complex"/>
    <property type="evidence" value="ECO:0000314"/>
    <property type="project" value="UniProtKB"/>
</dbReference>
<dbReference type="GO" id="GO:0001228">
    <property type="term" value="F:DNA-binding transcription activator activity, RNA polymerase II-specific"/>
    <property type="evidence" value="ECO:0000314"/>
    <property type="project" value="MGI"/>
</dbReference>
<dbReference type="GO" id="GO:0046974">
    <property type="term" value="F:histone H3K9 methyltransferase activity"/>
    <property type="evidence" value="ECO:0000314"/>
    <property type="project" value="UniProtKB"/>
</dbReference>
<dbReference type="GO" id="GO:0140948">
    <property type="term" value="F:histone H3K9 monomethyltransferase activity"/>
    <property type="evidence" value="ECO:0007669"/>
    <property type="project" value="UniProtKB-EC"/>
</dbReference>
<dbReference type="GO" id="GO:0140947">
    <property type="term" value="F:histone H3K9me2 methyltransferase activity"/>
    <property type="evidence" value="ECO:0007669"/>
    <property type="project" value="RHEA"/>
</dbReference>
<dbReference type="GO" id="GO:0043565">
    <property type="term" value="F:sequence-specific DNA binding"/>
    <property type="evidence" value="ECO:0000314"/>
    <property type="project" value="UniProtKB"/>
</dbReference>
<dbReference type="GO" id="GO:0046332">
    <property type="term" value="F:SMAD binding"/>
    <property type="evidence" value="ECO:0000353"/>
    <property type="project" value="MGI"/>
</dbReference>
<dbReference type="GO" id="GO:0003713">
    <property type="term" value="F:transcription coactivator activity"/>
    <property type="evidence" value="ECO:0000314"/>
    <property type="project" value="UniProtKB"/>
</dbReference>
<dbReference type="GO" id="GO:0008270">
    <property type="term" value="F:zinc ion binding"/>
    <property type="evidence" value="ECO:0007669"/>
    <property type="project" value="UniProtKB-KW"/>
</dbReference>
<dbReference type="GO" id="GO:0050873">
    <property type="term" value="P:brown fat cell differentiation"/>
    <property type="evidence" value="ECO:0000314"/>
    <property type="project" value="UniProtKB"/>
</dbReference>
<dbReference type="GO" id="GO:0070828">
    <property type="term" value="P:heterochromatin organization"/>
    <property type="evidence" value="ECO:0000315"/>
    <property type="project" value="UniProtKB"/>
</dbReference>
<dbReference type="GO" id="GO:0032259">
    <property type="term" value="P:methylation"/>
    <property type="evidence" value="ECO:0007669"/>
    <property type="project" value="UniProtKB-KW"/>
</dbReference>
<dbReference type="GO" id="GO:0045892">
    <property type="term" value="P:negative regulation of DNA-templated transcription"/>
    <property type="evidence" value="ECO:0000314"/>
    <property type="project" value="UniProtKB"/>
</dbReference>
<dbReference type="GO" id="GO:0030853">
    <property type="term" value="P:negative regulation of granulocyte differentiation"/>
    <property type="evidence" value="ECO:0000250"/>
    <property type="project" value="UniProtKB"/>
</dbReference>
<dbReference type="GO" id="GO:0000122">
    <property type="term" value="P:negative regulation of transcription by RNA polymerase II"/>
    <property type="evidence" value="ECO:0000315"/>
    <property type="project" value="MGI"/>
</dbReference>
<dbReference type="GO" id="GO:0030512">
    <property type="term" value="P:negative regulation of transforming growth factor beta receptor signaling pathway"/>
    <property type="evidence" value="ECO:0000315"/>
    <property type="project" value="MGI"/>
</dbReference>
<dbReference type="GO" id="GO:0022008">
    <property type="term" value="P:neurogenesis"/>
    <property type="evidence" value="ECO:0000314"/>
    <property type="project" value="MGI"/>
</dbReference>
<dbReference type="GO" id="GO:0090336">
    <property type="term" value="P:positive regulation of brown fat cell differentiation"/>
    <property type="evidence" value="ECO:0000315"/>
    <property type="project" value="MGI"/>
</dbReference>
<dbReference type="GO" id="GO:0120162">
    <property type="term" value="P:positive regulation of cold-induced thermogenesis"/>
    <property type="evidence" value="ECO:0000315"/>
    <property type="project" value="YuBioLab"/>
</dbReference>
<dbReference type="GO" id="GO:0045893">
    <property type="term" value="P:positive regulation of DNA-templated transcription"/>
    <property type="evidence" value="ECO:0000314"/>
    <property type="project" value="UniProtKB"/>
</dbReference>
<dbReference type="GO" id="GO:0043457">
    <property type="term" value="P:regulation of cellular respiration"/>
    <property type="evidence" value="ECO:0000314"/>
    <property type="project" value="UniProtKB"/>
</dbReference>
<dbReference type="GO" id="GO:0060021">
    <property type="term" value="P:roof of mouth development"/>
    <property type="evidence" value="ECO:0000315"/>
    <property type="project" value="MGI"/>
</dbReference>
<dbReference type="GO" id="GO:0035019">
    <property type="term" value="P:somatic stem cell population maintenance"/>
    <property type="evidence" value="ECO:0000314"/>
    <property type="project" value="MGI"/>
</dbReference>
<dbReference type="GO" id="GO:0019827">
    <property type="term" value="P:stem cell population maintenance"/>
    <property type="evidence" value="ECO:0000315"/>
    <property type="project" value="MGI"/>
</dbReference>
<dbReference type="GO" id="GO:0043586">
    <property type="term" value="P:tongue development"/>
    <property type="evidence" value="ECO:0000315"/>
    <property type="project" value="MGI"/>
</dbReference>
<dbReference type="GO" id="GO:0050872">
    <property type="term" value="P:white fat cell differentiation"/>
    <property type="evidence" value="ECO:0000314"/>
    <property type="project" value="UniProtKB"/>
</dbReference>
<dbReference type="CDD" id="cd19213">
    <property type="entry name" value="PR-SET_PRDM16"/>
    <property type="match status" value="1"/>
</dbReference>
<dbReference type="FunFam" id="3.30.160.60:FF:000112">
    <property type="entry name" value="Mds1 and evi1 complex locus protein"/>
    <property type="match status" value="1"/>
</dbReference>
<dbReference type="FunFam" id="3.30.160.60:FF:000126">
    <property type="entry name" value="Mds1 and evi1 complex locus protein"/>
    <property type="match status" value="1"/>
</dbReference>
<dbReference type="FunFam" id="3.30.160.60:FF:000150">
    <property type="entry name" value="Mds1 and evi1 complex locus protein"/>
    <property type="match status" value="1"/>
</dbReference>
<dbReference type="FunFam" id="3.30.160.60:FF:000159">
    <property type="entry name" value="Mds1 and evi1 complex locus protein"/>
    <property type="match status" value="1"/>
</dbReference>
<dbReference type="FunFam" id="3.30.160.60:FF:000192">
    <property type="entry name" value="Mds1 and evi1 complex locus protein"/>
    <property type="match status" value="1"/>
</dbReference>
<dbReference type="FunFam" id="2.170.270.10:FF:000025">
    <property type="entry name" value="MDS1 and EVI1 complex locus protein isoform X1"/>
    <property type="match status" value="1"/>
</dbReference>
<dbReference type="FunFam" id="3.30.160.60:FF:000929">
    <property type="entry name" value="Uncharacterized protein, isoform B"/>
    <property type="match status" value="1"/>
</dbReference>
<dbReference type="Gene3D" id="3.30.160.60">
    <property type="entry name" value="Classic Zinc Finger"/>
    <property type="match status" value="8"/>
</dbReference>
<dbReference type="Gene3D" id="2.170.270.10">
    <property type="entry name" value="SET domain"/>
    <property type="match status" value="1"/>
</dbReference>
<dbReference type="InterPro" id="IPR044410">
    <property type="entry name" value="PRDM16_PR-SET"/>
</dbReference>
<dbReference type="InterPro" id="IPR001214">
    <property type="entry name" value="SET_dom"/>
</dbReference>
<dbReference type="InterPro" id="IPR046341">
    <property type="entry name" value="SET_dom_sf"/>
</dbReference>
<dbReference type="InterPro" id="IPR050331">
    <property type="entry name" value="Zinc_finger"/>
</dbReference>
<dbReference type="InterPro" id="IPR036236">
    <property type="entry name" value="Znf_C2H2_sf"/>
</dbReference>
<dbReference type="InterPro" id="IPR013087">
    <property type="entry name" value="Znf_C2H2_type"/>
</dbReference>
<dbReference type="PANTHER" id="PTHR16515:SF66">
    <property type="entry name" value="C2H2-TYPE DOMAIN-CONTAINING PROTEIN"/>
    <property type="match status" value="1"/>
</dbReference>
<dbReference type="PANTHER" id="PTHR16515">
    <property type="entry name" value="PR DOMAIN ZINC FINGER PROTEIN"/>
    <property type="match status" value="1"/>
</dbReference>
<dbReference type="Pfam" id="PF21549">
    <property type="entry name" value="PRDM2_PR"/>
    <property type="match status" value="1"/>
</dbReference>
<dbReference type="Pfam" id="PF00096">
    <property type="entry name" value="zf-C2H2"/>
    <property type="match status" value="9"/>
</dbReference>
<dbReference type="SMART" id="SM00317">
    <property type="entry name" value="SET"/>
    <property type="match status" value="1"/>
</dbReference>
<dbReference type="SMART" id="SM00355">
    <property type="entry name" value="ZnF_C2H2"/>
    <property type="match status" value="10"/>
</dbReference>
<dbReference type="SUPFAM" id="SSF57667">
    <property type="entry name" value="beta-beta-alpha zinc fingers"/>
    <property type="match status" value="5"/>
</dbReference>
<dbReference type="SUPFAM" id="SSF82199">
    <property type="entry name" value="SET domain"/>
    <property type="match status" value="1"/>
</dbReference>
<dbReference type="PROSITE" id="PS50280">
    <property type="entry name" value="SET"/>
    <property type="match status" value="1"/>
</dbReference>
<dbReference type="PROSITE" id="PS00028">
    <property type="entry name" value="ZINC_FINGER_C2H2_1"/>
    <property type="match status" value="8"/>
</dbReference>
<dbReference type="PROSITE" id="PS50157">
    <property type="entry name" value="ZINC_FINGER_C2H2_2"/>
    <property type="match status" value="10"/>
</dbReference>
<proteinExistence type="evidence at protein level"/>
<gene>
    <name evidence="18" type="primary">Prdm16</name>
    <name evidence="16" type="synonym">Kiaa1675</name>
    <name evidence="13" type="synonym">Mel1</name>
</gene>
<accession>A2A935</accession>
<accession>Q69ZD6</accession>
<accession>Q6PB79</accession>
<accession>Q7TPF4</accession>
<comment type="function">
    <text evidence="6 7 8 9 10">Binds DNA and functions as a transcriptional regulator (PubMed:18483224). Displays histone methyltransferase activity and monomethylates 'Lys-9' of histone H3 (H3K9me1) in vitro (PubMed:22939622). Probably catalyzes the monomethylation of free histone H3 in the cytoplasm which is then transported to the nucleus and incorporated into nucleosomes where SUV39H methyltransferases use it as a substrate to catalyze histone H3 'Lys-9' trimethylation (PubMed:22939622). Likely to be one of the primary histone methyltransferases along with MECOM/PRDM3 that direct cytoplasmic H3K9me1 methylation (PubMed:22939622). Functions in the differentiation of brown adipose tissue (BAT) which is specialized in dissipating chemical energy in the form of heat in response to cold or excess feeding while white adipose tissue (WAT) is specialized in the storage of excess energy and the control of systemic metabolism (PubMed:17618855, PubMed:18483224). Together with CEBPB, regulates the differentiation of myoblastic precursors into brown adipose cells (PubMed:18719582, PubMed:19641492). Functions as a repressor of TGF-beta signaling.</text>
</comment>
<comment type="catalytic activity">
    <reaction evidence="10">
        <text>L-lysyl(9)-[histone H3] + S-adenosyl-L-methionine = N(6)-methyl-L-lysyl(9)-[histone H3] + S-adenosyl-L-homocysteine + H(+)</text>
        <dbReference type="Rhea" id="RHEA:60280"/>
        <dbReference type="Rhea" id="RHEA-COMP:15542"/>
        <dbReference type="Rhea" id="RHEA-COMP:15546"/>
        <dbReference type="ChEBI" id="CHEBI:15378"/>
        <dbReference type="ChEBI" id="CHEBI:29969"/>
        <dbReference type="ChEBI" id="CHEBI:57856"/>
        <dbReference type="ChEBI" id="CHEBI:59789"/>
        <dbReference type="ChEBI" id="CHEBI:61929"/>
        <dbReference type="EC" id="2.1.1.367"/>
    </reaction>
</comment>
<comment type="subunit">
    <text evidence="6 7 8 9 12 17">Interacts with CEBPA, CEBPB and CEBPD; the interaction is direct (PubMed:19641492). Interacts with PPARG and PPARA; controls brown adipocytes (PubMed:18719582). Interacts with CTBP1 and CTBP2; represses the expression of WAT-specific genes (PubMed:18483224). Interacts with PPARGC1A and PPARGC1B; interaction with PPARGC1A or PPARGC1B activates the transcription of BAT-specific gene (PubMed:17618855, PubMed:18483224). Interacts with HDAC1, SKI and SMAD2; the interaction with SKI promotes the recruitment of SMAD3-HDAC1 complex on the promoter of TGF-beta target genes (Probable). Interacts with ZNF516; the interaction is direct and may play a role in the transcription of brown adipose tissue-specific gene (PubMed:25578880).</text>
</comment>
<comment type="interaction">
    <interactant intactId="EBI-16080455">
        <id>A2A935-3</id>
    </interactant>
    <interactant intactId="EBI-16080518">
        <id>Q5DW34-1</id>
        <label>Ehmt1</label>
    </interactant>
    <organismsDiffer>false</organismsDiffer>
    <experiments>2</experiments>
</comment>
<comment type="subcellular location">
    <subcellularLocation>
        <location evidence="7">Nucleus</location>
    </subcellularLocation>
    <subcellularLocation>
        <location evidence="1">Cytoplasm</location>
    </subcellularLocation>
</comment>
<comment type="alternative products">
    <event type="alternative splicing"/>
    <isoform>
        <id>A2A935-1</id>
        <name>1</name>
        <sequence type="displayed"/>
    </isoform>
    <isoform>
        <id>A2A935-2</id>
        <name>2</name>
        <sequence type="described" ref="VSP_038066 VSP_038067 VSP_038068 VSP_038069"/>
    </isoform>
    <isoform>
        <id>A2A935-3</id>
        <name>3</name>
        <sequence type="described" ref="VSP_038067"/>
    </isoform>
</comment>
<comment type="tissue specificity">
    <text evidence="6 11">Enriched in BAT compared to WAT. Detected in heart, lung, kidney and brain. Expressed in nuclei of cardiomyocytes.</text>
</comment>
<comment type="developmental stage">
    <text evidence="5 11">Expressed at 12.5 dpc, 13.5 dpc and 14.5 dpc. Expressed in orofacial tissues, heart, liver, brain and limb bud. At 13.5 dpc, expressed throughout the ventricular myocardium, including endocardium and epicardium.</text>
</comment>
<comment type="disruption phenotype">
    <text evidence="8">Mice die at birth but embryos display altered brown adipose tissue differentiation.</text>
</comment>
<comment type="similarity">
    <text evidence="16">Belongs to the PRDM16 family.</text>
</comment>
<name>PRD16_MOUSE</name>
<protein>
    <recommendedName>
        <fullName evidence="16">Histone-lysine N-methyltransferase PRDM16</fullName>
        <ecNumber evidence="10">2.1.1.367</ecNumber>
    </recommendedName>
    <alternativeName>
        <fullName evidence="16">PR domain zinc finger protein 16</fullName>
    </alternativeName>
    <alternativeName>
        <fullName evidence="16">PR domain-containing protein 16</fullName>
    </alternativeName>
    <alternativeName>
        <fullName evidence="16">Transcription factor MEL1</fullName>
        <shortName evidence="13">MDS1/EVI1-like gene 1</shortName>
    </alternativeName>
</protein>
<feature type="chain" id="PRO_0000384377" description="Histone-lysine N-methyltransferase PRDM16">
    <location>
        <begin position="1"/>
        <end position="1275"/>
    </location>
</feature>
<feature type="domain" description="SET" evidence="3">
    <location>
        <begin position="82"/>
        <end position="211"/>
    </location>
</feature>
<feature type="zinc finger region" description="C2H2-type 1; degenerate" evidence="2">
    <location>
        <begin position="230"/>
        <end position="255"/>
    </location>
</feature>
<feature type="zinc finger region" description="C2H2-type 2" evidence="2">
    <location>
        <begin position="282"/>
        <end position="304"/>
    </location>
</feature>
<feature type="zinc finger region" description="C2H2-type 3" evidence="2">
    <location>
        <begin position="310"/>
        <end position="332"/>
    </location>
</feature>
<feature type="zinc finger region" description="C2H2-type 4" evidence="2">
    <location>
        <begin position="338"/>
        <end position="361"/>
    </location>
</feature>
<feature type="zinc finger region" description="C2H2-type 5" evidence="2">
    <location>
        <begin position="367"/>
        <end position="389"/>
    </location>
</feature>
<feature type="zinc finger region" description="C2H2-type 6" evidence="2">
    <location>
        <begin position="395"/>
        <end position="417"/>
    </location>
</feature>
<feature type="zinc finger region" description="C2H2-type 7; atypical" evidence="2">
    <location>
        <begin position="424"/>
        <end position="446"/>
    </location>
</feature>
<feature type="zinc finger region" description="C2H2-type 8" evidence="2">
    <location>
        <begin position="951"/>
        <end position="973"/>
    </location>
</feature>
<feature type="zinc finger region" description="C2H2-type 9" evidence="2">
    <location>
        <begin position="979"/>
        <end position="1002"/>
    </location>
</feature>
<feature type="zinc finger region" description="C2H2-type 10" evidence="2">
    <location>
        <begin position="1008"/>
        <end position="1030"/>
    </location>
</feature>
<feature type="region of interest" description="Disordered" evidence="4">
    <location>
        <begin position="1"/>
        <end position="66"/>
    </location>
</feature>
<feature type="region of interest" description="Disordered" evidence="4">
    <location>
        <begin position="592"/>
        <end position="658"/>
    </location>
</feature>
<feature type="region of interest" description="Interaction with CTBP1, CTBP2 and ZNF516" evidence="7">
    <location>
        <begin position="680"/>
        <end position="1038"/>
    </location>
</feature>
<feature type="region of interest" description="Mediates interaction with SKI and regulation of TGF-beta signaling" evidence="1">
    <location>
        <begin position="740"/>
        <end position="1275"/>
    </location>
</feature>
<feature type="region of interest" description="Disordered" evidence="4">
    <location>
        <begin position="789"/>
        <end position="838"/>
    </location>
</feature>
<feature type="region of interest" description="Disordered" evidence="4">
    <location>
        <begin position="1027"/>
        <end position="1065"/>
    </location>
</feature>
<feature type="region of interest" description="Disordered" evidence="4">
    <location>
        <begin position="1084"/>
        <end position="1169"/>
    </location>
</feature>
<feature type="compositionally biased region" description="Basic residues" evidence="4">
    <location>
        <begin position="1"/>
        <end position="10"/>
    </location>
</feature>
<feature type="compositionally biased region" description="Low complexity" evidence="4">
    <location>
        <begin position="610"/>
        <end position="625"/>
    </location>
</feature>
<feature type="compositionally biased region" description="Basic and acidic residues" evidence="4">
    <location>
        <begin position="631"/>
        <end position="648"/>
    </location>
</feature>
<feature type="compositionally biased region" description="Basic and acidic residues" evidence="4">
    <location>
        <begin position="821"/>
        <end position="835"/>
    </location>
</feature>
<feature type="compositionally biased region" description="Polar residues" evidence="4">
    <location>
        <begin position="1038"/>
        <end position="1058"/>
    </location>
</feature>
<feature type="compositionally biased region" description="Acidic residues" evidence="4">
    <location>
        <begin position="1117"/>
        <end position="1133"/>
    </location>
</feature>
<feature type="splice variant" id="VSP_038066" description="In isoform 2." evidence="15">
    <original>E</original>
    <variation>EQ</variation>
    <location>
        <position position="129"/>
    </location>
</feature>
<feature type="splice variant" id="VSP_038067" description="In isoform 2 and isoform 3." evidence="14 15">
    <original>Y</original>
    <variation>YS</variation>
    <location>
        <position position="868"/>
    </location>
</feature>
<feature type="splice variant" id="VSP_038068" description="In isoform 2." evidence="15">
    <original>CVE</original>
    <variation>HMQ</variation>
    <location>
        <begin position="1174"/>
        <end position="1176"/>
    </location>
</feature>
<feature type="splice variant" id="VSP_038069" description="In isoform 2." evidence="15">
    <location>
        <begin position="1177"/>
        <end position="1275"/>
    </location>
</feature>
<feature type="mutagenesis site" description="Loss of interaction with CTBP1 and CTBP2 and loss of repression of WAT-specific genes." evidence="7">
    <original>DL</original>
    <variation>AS</variation>
    <location>
        <begin position="805"/>
        <end position="806"/>
    </location>
</feature>
<feature type="mutagenesis site" description="Loss of DNA-binding activity but no effect on PRDM16-mediated BAT gene transcription activation." evidence="6">
    <original>R</original>
    <variation>Q</variation>
    <location>
        <position position="996"/>
    </location>
</feature>
<feature type="sequence conflict" description="In Ref. 1; BAC79382." evidence="16" ref="1">
    <original>R</original>
    <variation>K</variation>
    <location>
        <position position="8"/>
    </location>
</feature>
<feature type="sequence conflict" description="In Ref. 1; BAC79382." evidence="16" ref="1">
    <original>A</original>
    <variation>T</variation>
    <location>
        <position position="510"/>
    </location>
</feature>
<feature type="sequence conflict" description="In Ref. 1; BAC79382." evidence="16" ref="1">
    <original>G</original>
    <variation>D</variation>
    <location>
        <position position="706"/>
    </location>
</feature>
<feature type="sequence conflict" description="In Ref. 1; BAC79382." evidence="16" ref="1">
    <original>P</original>
    <variation>L</variation>
    <location>
        <position position="732"/>
    </location>
</feature>
<feature type="sequence conflict" description="In Ref. 1; BAC79382." evidence="16" ref="1">
    <original>R</original>
    <variation>Q</variation>
    <location>
        <position position="760"/>
    </location>
</feature>
<keyword id="KW-0010">Activator</keyword>
<keyword id="KW-0025">Alternative splicing</keyword>
<keyword id="KW-0963">Cytoplasm</keyword>
<keyword id="KW-0221">Differentiation</keyword>
<keyword id="KW-0238">DNA-binding</keyword>
<keyword id="KW-0479">Metal-binding</keyword>
<keyword id="KW-0489">Methyltransferase</keyword>
<keyword id="KW-0539">Nucleus</keyword>
<keyword id="KW-1185">Reference proteome</keyword>
<keyword id="KW-0677">Repeat</keyword>
<keyword id="KW-0678">Repressor</keyword>
<keyword id="KW-0804">Transcription</keyword>
<keyword id="KW-0805">Transcription regulation</keyword>
<keyword id="KW-0808">Transferase</keyword>
<keyword id="KW-0862">Zinc</keyword>
<keyword id="KW-0863">Zinc-finger</keyword>
<evidence type="ECO:0000250" key="1">
    <source>
        <dbReference type="UniProtKB" id="Q9HAZ2"/>
    </source>
</evidence>
<evidence type="ECO:0000255" key="2">
    <source>
        <dbReference type="PROSITE-ProRule" id="PRU00042"/>
    </source>
</evidence>
<evidence type="ECO:0000255" key="3">
    <source>
        <dbReference type="PROSITE-ProRule" id="PRU00190"/>
    </source>
</evidence>
<evidence type="ECO:0000256" key="4">
    <source>
        <dbReference type="SAM" id="MobiDB-lite"/>
    </source>
</evidence>
<evidence type="ECO:0000269" key="5">
    <source>
    </source>
</evidence>
<evidence type="ECO:0000269" key="6">
    <source>
    </source>
</evidence>
<evidence type="ECO:0000269" key="7">
    <source>
    </source>
</evidence>
<evidence type="ECO:0000269" key="8">
    <source>
    </source>
</evidence>
<evidence type="ECO:0000269" key="9">
    <source>
    </source>
</evidence>
<evidence type="ECO:0000269" key="10">
    <source>
    </source>
</evidence>
<evidence type="ECO:0000269" key="11">
    <source>
    </source>
</evidence>
<evidence type="ECO:0000269" key="12">
    <source>
    </source>
</evidence>
<evidence type="ECO:0000303" key="13">
    <source>
    </source>
</evidence>
<evidence type="ECO:0000303" key="14">
    <source>
    </source>
</evidence>
<evidence type="ECO:0000303" key="15">
    <source>
    </source>
</evidence>
<evidence type="ECO:0000305" key="16"/>
<evidence type="ECO:0000305" key="17">
    <source>
    </source>
</evidence>
<evidence type="ECO:0000312" key="18">
    <source>
        <dbReference type="MGI" id="MGI:1917923"/>
    </source>
</evidence>
<sequence>MRSKARARKLAKSDGDVVNNMYEPDPDLLAGQSAEEETEDGILSPIPMGPPSPFPTSEDFTPKEGSPYEAPVYIPEDIPIPPDFELRESSIPGAGLGIWAKRKMEIGERFGPYVVTPRAALKEADFGWEMLTDTEVSSQESCIKKQISEDLGSEKFCVDANQAGSGSWLKYIRVACSCDDQNLAMCQINEQIYYKVIKDIEPGEELLVHVKEGAYSLGVMAPSLDEDPTFRCDECDELFQCRLDLRRHKKYACSSAGAQLYEGLGEELKPEGLGVGSDGQAHECKDCERMFPNKYSLEQHMIVHTEEREYKCDQCPKAFNWKSNLIRHQMSHDSGKRFECENCVKVFTDPSNLQRHIRSQHVGARAHACPDCGKTFATSSGLKQHKHIHSTVKPFICEVCHKSYTQFSNLCRHKRMHADCRTQIKCKDCGQMFSTTSSLNKHRRFCEGKNHYTPGSIFTPGLPLTPSPMMDKTKPSPTLNHGGLGFSEYFPSRPHPGSLPFSAAPPAFPALTPGFPGIFPPSLYPRPPLLPPTPLLKSPLNHAQDAKLPSPLGNPALPLVSAVSNSSQGATAATGSEEKFDGRLEDAYAEKVKNRSPDMSDGSDFEDINTTTGTDLDTTTGTGSDLDSDLDSDRDKGKDKGKPVESKPEFGGASVPPGAMNSVAEVPAFYSQHSFFPPPEEQLLTASGAAGDSIKAIASIAEKYFGPGFMSMQEKKLGSLPYHSVFPFQFLPNFPHSLYPFTDRALAHNLLVKAEPKSPRDALKVGGPSAECPFDLTTKPKEAKPALLAPKVPLIPSSGEEQPLDLSIGSRARASQNGGGREPRKNHVYGERKPGVSEGLPKVCPAQLPQQPSLHYAKPSPFFMDPIYRVEKRKVADPVGVLKEKYLRPSPLLFHPQMSAIETMTEKLESFAAMKADSGSSLQPLPHHPFNFRSPPPTLSDPILRKGKERYTCRYCGKIFPRSANLTRHLRTHTGEQPYRCKYCDRSFSISSNLQRHVRNIHNKEKPFKCHLCNRCFGQQTNLDRHLKKHEHEGAPVSQHSGVLTNHLGTSASSPTSESDNHALLDEKEDSYFSEIRNFIANSEMNQASTRMDKRPEIQDLDSNPPCPGSASAKPEDVEEEEEEELEEEDDDSLAGKSQEDTVSPTPEPQGVYEDEEDEEPPSLTMGFDHTRRCVEERGGGLLALEPTPTFGKGLDLRRAAEEAFEVKDVLNSTLDSEVLKQTLYRQAKNQAYAMMLSLSEDTPLHAPSQSSLDAWLNITGPSSESGAFNPINHL</sequence>
<reference key="1">
    <citation type="journal article" date="2003" name="Blood">
        <title>A novel EVI1 gene family, MEL1, lacking a PR domain (MEL1S) is expressed mainly in t(1;3)(p36;q21)-positive AML and blocks G-CSF-induced myeloid differentiation.</title>
        <authorList>
            <person name="Nishikata I."/>
            <person name="Sasaki H."/>
            <person name="Iga M."/>
            <person name="Tateno Y."/>
            <person name="Imayoshi S."/>
            <person name="Asou N."/>
            <person name="Nakamura T."/>
            <person name="Morishita K."/>
        </authorList>
    </citation>
    <scope>NUCLEOTIDE SEQUENCE [MRNA] (ISOFORM 1)</scope>
    <source>
        <tissue>Placenta</tissue>
    </source>
</reference>
<reference key="2">
    <citation type="journal article" date="2009" name="PLoS Biol.">
        <title>Lineage-specific biology revealed by a finished genome assembly of the mouse.</title>
        <authorList>
            <person name="Church D.M."/>
            <person name="Goodstadt L."/>
            <person name="Hillier L.W."/>
            <person name="Zody M.C."/>
            <person name="Goldstein S."/>
            <person name="She X."/>
            <person name="Bult C.J."/>
            <person name="Agarwala R."/>
            <person name="Cherry J.L."/>
            <person name="DiCuccio M."/>
            <person name="Hlavina W."/>
            <person name="Kapustin Y."/>
            <person name="Meric P."/>
            <person name="Maglott D."/>
            <person name="Birtle Z."/>
            <person name="Marques A.C."/>
            <person name="Graves T."/>
            <person name="Zhou S."/>
            <person name="Teague B."/>
            <person name="Potamousis K."/>
            <person name="Churas C."/>
            <person name="Place M."/>
            <person name="Herschleb J."/>
            <person name="Runnheim R."/>
            <person name="Forrest D."/>
            <person name="Amos-Landgraf J."/>
            <person name="Schwartz D.C."/>
            <person name="Cheng Z."/>
            <person name="Lindblad-Toh K."/>
            <person name="Eichler E.E."/>
            <person name="Ponting C.P."/>
        </authorList>
    </citation>
    <scope>NUCLEOTIDE SEQUENCE [LARGE SCALE GENOMIC DNA]</scope>
    <source>
        <strain>C57BL/6J</strain>
    </source>
</reference>
<reference key="3">
    <citation type="journal article" date="2004" name="Genome Res.">
        <title>The status, quality, and expansion of the NIH full-length cDNA project: the Mammalian Gene Collection (MGC).</title>
        <authorList>
            <consortium name="The MGC Project Team"/>
        </authorList>
    </citation>
    <scope>NUCLEOTIDE SEQUENCE [LARGE SCALE MRNA] (ISOFORM 2)</scope>
    <source>
        <strain>C57BL/6J</strain>
        <tissue>Brain</tissue>
    </source>
</reference>
<reference key="4">
    <citation type="journal article" date="2004" name="DNA Res.">
        <title>Prediction of the coding sequences of mouse homologues of KIAA gene: IV. The complete nucleotide sequences of 500 mouse KIAA-homologous cDNAs identified by screening of terminal sequences of cDNA clones randomly sampled from size-fractionated libraries.</title>
        <authorList>
            <person name="Okazaki N."/>
            <person name="Kikuno R."/>
            <person name="Ohara R."/>
            <person name="Inamoto S."/>
            <person name="Koseki H."/>
            <person name="Hiraoka S."/>
            <person name="Saga Y."/>
            <person name="Seino S."/>
            <person name="Nishimura M."/>
            <person name="Kaisho T."/>
            <person name="Hoshino K."/>
            <person name="Kitamura H."/>
            <person name="Nagase T."/>
            <person name="Ohara O."/>
            <person name="Koga H."/>
        </authorList>
    </citation>
    <scope>NUCLEOTIDE SEQUENCE [LARGE SCALE MRNA] OF 570-1275 (ISOFORM 3)</scope>
    <source>
        <tissue>Pancreatic islet</tissue>
    </source>
</reference>
<reference key="5">
    <citation type="journal article" date="2007" name="Biochim. Biophys. Acta">
        <title>PRDM16/MEL1: a novel Smad binding protein expressed in murine embryonic orofacial tissue.</title>
        <authorList>
            <person name="Warner D.R."/>
            <person name="Horn K.H."/>
            <person name="Mudd L."/>
            <person name="Webb C.L."/>
            <person name="Greene R.M."/>
            <person name="Pisano M.M."/>
        </authorList>
    </citation>
    <scope>INTERACTION WITH SMAD3</scope>
    <scope>DEVELOPMENTAL STAGE</scope>
</reference>
<reference key="6">
    <citation type="journal article" date="2007" name="Cell Metab.">
        <title>Transcriptional control of brown fat determination by PRDM16.</title>
        <authorList>
            <person name="Seale P."/>
            <person name="Kajimura S."/>
            <person name="Yang W."/>
            <person name="Chin S."/>
            <person name="Rohas L.M."/>
            <person name="Uldry M."/>
            <person name="Tavernier G."/>
            <person name="Langin D."/>
            <person name="Spiegelman B.M."/>
        </authorList>
    </citation>
    <scope>FUNCTION</scope>
    <scope>INTERACTION WITH PPARGC1A AND PPARGC1B</scope>
    <scope>MUTAGENESIS OF ARG-996</scope>
    <scope>TISSUE SPECIFICITY</scope>
</reference>
<reference key="7">
    <citation type="journal article" date="2008" name="Genes Dev.">
        <title>Regulation of the brown and white fat gene programs through a PRDM16/CtBP transcriptional complex.</title>
        <authorList>
            <person name="Kajimura S."/>
            <person name="Seale P."/>
            <person name="Tomaru T."/>
            <person name="Erdjument-Bromage H."/>
            <person name="Cooper M.P."/>
            <person name="Ruas J.L."/>
            <person name="Chin S."/>
            <person name="Tempst P."/>
            <person name="Lazar M.A."/>
            <person name="Spiegelman B.M."/>
        </authorList>
    </citation>
    <scope>FUNCTION</scope>
    <scope>INTERACTION WITH CTBP1; CTBP2; PPARGC1A AND PPARGC1B</scope>
    <scope>SUBCELLULAR LOCATION</scope>
    <scope>MUTAGENESIS OF 805-ASP-LEU-806</scope>
    <scope>REGION</scope>
</reference>
<reference key="8">
    <citation type="journal article" date="2008" name="Nature">
        <title>PRDM16 controls a brown fat/skeletal muscle switch.</title>
        <authorList>
            <person name="Seale P."/>
            <person name="Bjork B."/>
            <person name="Yang W."/>
            <person name="Kajimura S."/>
            <person name="Chin S."/>
            <person name="Kuang S."/>
            <person name="Scime A."/>
            <person name="Devarakonda S."/>
            <person name="Conroe H.M."/>
            <person name="Erdjument-Bromage H."/>
            <person name="Tempst P."/>
            <person name="Rudnicki M.A."/>
            <person name="Beier D.R."/>
            <person name="Spiegelman B.M."/>
        </authorList>
    </citation>
    <scope>FUNCTION</scope>
    <scope>INTERACTION WITH PPARA AND PPARG</scope>
    <scope>DISRUPTION PHENOTYPE</scope>
</reference>
<reference key="9">
    <citation type="journal article" date="2009" name="Nature">
        <title>Initiation of myoblast to brown fat switch by a PRDM16-C/EBP-beta transcriptional complex.</title>
        <authorList>
            <person name="Kajimura S."/>
            <person name="Seale P."/>
            <person name="Kubota K."/>
            <person name="Lunsford E."/>
            <person name="Frangioni J.V."/>
            <person name="Gygi S.P."/>
            <person name="Spiegelman B.M."/>
        </authorList>
    </citation>
    <scope>FUNCTION</scope>
    <scope>INTERACTION WITH CEBPA; CEBPB AND CEBPD</scope>
</reference>
<reference key="10">
    <citation type="journal article" date="2012" name="Cell">
        <title>Prdm3 and Prdm16 are H3K9me1 methyltransferases required for mammalian heterochromatin integrity.</title>
        <authorList>
            <person name="Pinheiro I."/>
            <person name="Margueron R."/>
            <person name="Shukeir N."/>
            <person name="Eisold M."/>
            <person name="Fritzsch C."/>
            <person name="Richter F.M."/>
            <person name="Mittler G."/>
            <person name="Genoud C."/>
            <person name="Goyama S."/>
            <person name="Kurokawa M."/>
            <person name="Son J."/>
            <person name="Reinberg D."/>
            <person name="Lachner M."/>
            <person name="Jenuwein T."/>
        </authorList>
    </citation>
    <scope>FUNCTION</scope>
    <scope>CATALYTIC ACTIVITY</scope>
</reference>
<reference key="11">
    <citation type="journal article" date="2013" name="Am. J. Hum. Genet.">
        <title>Fine mapping of the 1p36 deletion syndrome identifies mutation of PRDM16 as a cause of cardiomyopathy.</title>
        <authorList>
            <person name="Arndt A.K."/>
            <person name="Schafer S."/>
            <person name="Drenckhahn J.D."/>
            <person name="Sabeh M.K."/>
            <person name="Plovie E.R."/>
            <person name="Caliebe A."/>
            <person name="Klopocki E."/>
            <person name="Musso G."/>
            <person name="Werdich A.A."/>
            <person name="Kalwa H."/>
            <person name="Heinig M."/>
            <person name="Padera R.F."/>
            <person name="Wassilew K."/>
            <person name="Bluhm J."/>
            <person name="Harnack C."/>
            <person name="Martitz J."/>
            <person name="Barton P.J."/>
            <person name="Greutmann M."/>
            <person name="Berger F."/>
            <person name="Hubner N."/>
            <person name="Siebert R."/>
            <person name="Kramer H.H."/>
            <person name="Cook S.A."/>
            <person name="MacRae C.A."/>
            <person name="Klaassen S."/>
        </authorList>
    </citation>
    <scope>DEVELOPMENTAL STAGE</scope>
    <scope>TISSUE SPECIFICITY</scope>
</reference>
<reference key="12">
    <citation type="journal article" date="2015" name="Mol. Cell">
        <title>Cold-inducible Zfp516 activates UCP1 transcription to promote browning of white fat and development of brown fat.</title>
        <authorList>
            <person name="Dempersmier J."/>
            <person name="Sambeat A."/>
            <person name="Gulyaeva O."/>
            <person name="Paul S.M."/>
            <person name="Hudak C.S."/>
            <person name="Raposo H.F."/>
            <person name="Kwan H.Y."/>
            <person name="Kang C."/>
            <person name="Wong R.H."/>
            <person name="Sul H.S."/>
        </authorList>
    </citation>
    <scope>INTERACTION WITH ZNF516</scope>
    <scope>REGION</scope>
</reference>